<name>LUXA_PHOLL</name>
<feature type="chain" id="PRO_0000220166" description="Alkanal monooxygenase alpha chain">
    <location>
        <begin position="1"/>
        <end position="359"/>
    </location>
</feature>
<dbReference type="EC" id="1.14.14.3" evidence="2"/>
<dbReference type="EMBL" id="BX571866">
    <property type="protein sequence ID" value="CAE14374.1"/>
    <property type="molecule type" value="Genomic_DNA"/>
</dbReference>
<dbReference type="RefSeq" id="WP_011146336.1">
    <property type="nucleotide sequence ID" value="NC_005126.1"/>
</dbReference>
<dbReference type="SMR" id="Q7N575"/>
<dbReference type="STRING" id="243265.plu2081"/>
<dbReference type="GeneID" id="48848357"/>
<dbReference type="KEGG" id="plu:plu2081"/>
<dbReference type="eggNOG" id="COG2141">
    <property type="taxonomic scope" value="Bacteria"/>
</dbReference>
<dbReference type="HOGENOM" id="CLU_027853_3_0_6"/>
<dbReference type="OrthoDB" id="7903015at2"/>
<dbReference type="Proteomes" id="UP000002514">
    <property type="component" value="Chromosome"/>
</dbReference>
<dbReference type="GO" id="GO:0005829">
    <property type="term" value="C:cytosol"/>
    <property type="evidence" value="ECO:0007669"/>
    <property type="project" value="TreeGrafter"/>
</dbReference>
<dbReference type="GO" id="GO:0047646">
    <property type="term" value="F:alkanal monooxygenase (FMN-linked) activity"/>
    <property type="evidence" value="ECO:0007669"/>
    <property type="project" value="UniProtKB-EC"/>
</dbReference>
<dbReference type="GO" id="GO:0008218">
    <property type="term" value="P:bioluminescence"/>
    <property type="evidence" value="ECO:0007669"/>
    <property type="project" value="UniProtKB-KW"/>
</dbReference>
<dbReference type="CDD" id="cd01096">
    <property type="entry name" value="Alkanal_monooxygenase"/>
    <property type="match status" value="1"/>
</dbReference>
<dbReference type="Gene3D" id="3.20.20.30">
    <property type="entry name" value="Luciferase-like domain"/>
    <property type="match status" value="1"/>
</dbReference>
<dbReference type="InterPro" id="IPR033924">
    <property type="entry name" value="Alkanal_monooxygenase"/>
</dbReference>
<dbReference type="InterPro" id="IPR050766">
    <property type="entry name" value="Bact_Lucif_Oxidored"/>
</dbReference>
<dbReference type="InterPro" id="IPR018235">
    <property type="entry name" value="Bacterial_luciferase_CS"/>
</dbReference>
<dbReference type="InterPro" id="IPR011251">
    <property type="entry name" value="Luciferase-like_dom"/>
</dbReference>
<dbReference type="InterPro" id="IPR036661">
    <property type="entry name" value="Luciferase-like_sf"/>
</dbReference>
<dbReference type="InterPro" id="IPR002103">
    <property type="entry name" value="Luciferase_bac/NFP"/>
</dbReference>
<dbReference type="PANTHER" id="PTHR30137:SF8">
    <property type="entry name" value="BLR5498 PROTEIN"/>
    <property type="match status" value="1"/>
</dbReference>
<dbReference type="PANTHER" id="PTHR30137">
    <property type="entry name" value="LUCIFERASE-LIKE MONOOXYGENASE"/>
    <property type="match status" value="1"/>
</dbReference>
<dbReference type="Pfam" id="PF00296">
    <property type="entry name" value="Bac_luciferase"/>
    <property type="match status" value="1"/>
</dbReference>
<dbReference type="PRINTS" id="PR00089">
    <property type="entry name" value="LUCIFERASE"/>
</dbReference>
<dbReference type="SUPFAM" id="SSF51679">
    <property type="entry name" value="Bacterial luciferase-like"/>
    <property type="match status" value="1"/>
</dbReference>
<dbReference type="PROSITE" id="PS00494">
    <property type="entry name" value="BACTERIAL_LUCIFERASE"/>
    <property type="match status" value="1"/>
</dbReference>
<protein>
    <recommendedName>
        <fullName>Alkanal monooxygenase alpha chain</fullName>
        <ecNumber evidence="2">1.14.14.3</ecNumber>
    </recommendedName>
    <alternativeName>
        <fullName>Bacterial luciferase alpha chain</fullName>
    </alternativeName>
</protein>
<accession>Q7N575</accession>
<keyword id="KW-0285">Flavoprotein</keyword>
<keyword id="KW-0288">FMN</keyword>
<keyword id="KW-0455">Luminescence</keyword>
<keyword id="KW-0503">Monooxygenase</keyword>
<keyword id="KW-0560">Oxidoreductase</keyword>
<keyword id="KW-0599">Photoprotein</keyword>
<keyword id="KW-1185">Reference proteome</keyword>
<organism>
    <name type="scientific">Photorhabdus laumondii subsp. laumondii (strain DSM 15139 / CIP 105565 / TT01)</name>
    <name type="common">Photorhabdus luminescens subsp. laumondii</name>
    <dbReference type="NCBI Taxonomy" id="243265"/>
    <lineage>
        <taxon>Bacteria</taxon>
        <taxon>Pseudomonadati</taxon>
        <taxon>Pseudomonadota</taxon>
        <taxon>Gammaproteobacteria</taxon>
        <taxon>Enterobacterales</taxon>
        <taxon>Morganellaceae</taxon>
        <taxon>Photorhabdus</taxon>
    </lineage>
</organism>
<proteinExistence type="inferred from homology"/>
<gene>
    <name type="primary">luxA</name>
    <name type="ordered locus">plu2081</name>
</gene>
<reference key="1">
    <citation type="journal article" date="2003" name="Nat. Biotechnol.">
        <title>The genome sequence of the entomopathogenic bacterium Photorhabdus luminescens.</title>
        <authorList>
            <person name="Duchaud E."/>
            <person name="Rusniok C."/>
            <person name="Frangeul L."/>
            <person name="Buchrieser C."/>
            <person name="Givaudan A."/>
            <person name="Taourit S."/>
            <person name="Bocs S."/>
            <person name="Boursaux-Eude C."/>
            <person name="Chandler M."/>
            <person name="Charles J.-F."/>
            <person name="Dassa E."/>
            <person name="Derose R."/>
            <person name="Derzelle S."/>
            <person name="Freyssinet G."/>
            <person name="Gaudriault S."/>
            <person name="Medigue C."/>
            <person name="Lanois A."/>
            <person name="Powell K."/>
            <person name="Siguier P."/>
            <person name="Vincent R."/>
            <person name="Wingate V."/>
            <person name="Zouine M."/>
            <person name="Glaser P."/>
            <person name="Boemare N."/>
            <person name="Danchin A."/>
            <person name="Kunst F."/>
        </authorList>
    </citation>
    <scope>NUCLEOTIDE SEQUENCE [LARGE SCALE GENOMIC DNA]</scope>
    <source>
        <strain>DSM 15139 / CIP 105565 / TT01</strain>
    </source>
</reference>
<evidence type="ECO:0000250" key="1">
    <source>
        <dbReference type="UniProtKB" id="P07740"/>
    </source>
</evidence>
<evidence type="ECO:0000250" key="2">
    <source>
        <dbReference type="UniProtKB" id="P19839"/>
    </source>
</evidence>
<evidence type="ECO:0000305" key="3"/>
<sequence>MKFGNFLLTYQPPQFSQTEVMKRLVKLGRISEECGFDTVWLLEHHFTEFGLLGNPYVAAAYLLGATKKLNVGTAAIVLPTAHPVRQLEDVNLLDQMSKGRFRFGICRGLYNKDFRVFGTDMNNSRALTECWYGLIKNGMTEGYMEADNEHIKFHKVKVNPTAYSKGGAPVYVVAESASTTEWAAQFGLPMILSWIINTNEKKAQLELYNEVAQEYGHDIHNIDHCLSYITSVNYDSNKAQEICRDFLGHWYDSYVNATTIFDDSDKTRGYDFNKGQWRDFVLKGHRDTNRRIDYSYEINPVGTPQECIDIIQKDIDATGISNICCGFEANGTVDEIIASMKLFQSDVMPFLKEKQRSLL</sequence>
<comment type="function">
    <text evidence="2">Light-emitting reaction in luminous bacteria.</text>
</comment>
<comment type="catalytic activity">
    <reaction evidence="2">
        <text>a long-chain fatty aldehyde + FMNH2 + O2 = a long-chain fatty acid + hnu + FMN + H2O + 2 H(+)</text>
        <dbReference type="Rhea" id="RHEA:17181"/>
        <dbReference type="ChEBI" id="CHEBI:15377"/>
        <dbReference type="ChEBI" id="CHEBI:15378"/>
        <dbReference type="ChEBI" id="CHEBI:15379"/>
        <dbReference type="ChEBI" id="CHEBI:17176"/>
        <dbReference type="ChEBI" id="CHEBI:30212"/>
        <dbReference type="ChEBI" id="CHEBI:57560"/>
        <dbReference type="ChEBI" id="CHEBI:57618"/>
        <dbReference type="ChEBI" id="CHEBI:58210"/>
        <dbReference type="EC" id="1.14.14.3"/>
    </reaction>
</comment>
<comment type="subunit">
    <text evidence="1">Heterodimer of an alpha and a beta chain.</text>
</comment>
<comment type="similarity">
    <text evidence="3">Belongs to the bacterial luciferase oxidoreductase family.</text>
</comment>